<geneLocation type="plasmid">
    <name>pTi15955</name>
</geneLocation>
<keyword id="KW-0010">Activator</keyword>
<keyword id="KW-0192">Crown gall tumor</keyword>
<keyword id="KW-0963">Cytoplasm</keyword>
<keyword id="KW-0238">DNA-binding</keyword>
<keyword id="KW-0597">Phosphoprotein</keyword>
<keyword id="KW-0614">Plasmid</keyword>
<keyword id="KW-0804">Transcription</keyword>
<keyword id="KW-0805">Transcription regulation</keyword>
<keyword id="KW-0902">Two-component regulatory system</keyword>
<protein>
    <recommendedName>
        <fullName>Regulatory protein VirG</fullName>
    </recommendedName>
</protein>
<accession>P62722</accession>
<accession>P06664</accession>
<reference key="1">
    <citation type="journal article" date="1986" name="Nucleic Acids Res.">
        <title>Nucleotide sequence of the virulence gene virG of the Agrobacterium tumefaciens octopine Ti plasmid: significant homology between virG and the regulatory genes ompR, phoB and dye of E. coli.</title>
        <authorList>
            <person name="Melchers L.S."/>
            <person name="Thompson D.V."/>
            <person name="Idler K.B."/>
            <person name="Schilperoort R.A."/>
            <person name="Hooykaas P.J.J."/>
        </authorList>
    </citation>
    <scope>NUCLEOTIDE SEQUENCE [GENOMIC DNA]</scope>
</reference>
<sequence length="267" mass="29956">MIVHPSRENFSSAVNKGSDFRLKGEPLKHVLLVDDDVAMRHLIIEYLTIHAFKVTAVADSTQFTRVLSSATVDVVVVDLNLGREDGLEIVRNLAAKSDIPIIIISGDRLEETDKVVALELGASDFIAKPFSIREFLARIRVALRVRPNVVRSKDRRSFCFTDWTLNLRQRRLMSEAGGEVKLTAGEFNLLLAFLEKPRDVLSREQLLIASRVRDEEVYDRSIDVLILRLRRKLEADPSSPQLIKTARGAGYFFDADVQVSHGGTMAA</sequence>
<dbReference type="EMBL" id="X04965">
    <property type="protein sequence ID" value="CAA28638.1"/>
    <property type="molecule type" value="Genomic_DNA"/>
</dbReference>
<dbReference type="PIR" id="A25519">
    <property type="entry name" value="A25519"/>
</dbReference>
<dbReference type="SMR" id="P62722"/>
<dbReference type="GO" id="GO:0005829">
    <property type="term" value="C:cytosol"/>
    <property type="evidence" value="ECO:0007669"/>
    <property type="project" value="TreeGrafter"/>
</dbReference>
<dbReference type="GO" id="GO:0032993">
    <property type="term" value="C:protein-DNA complex"/>
    <property type="evidence" value="ECO:0007669"/>
    <property type="project" value="TreeGrafter"/>
</dbReference>
<dbReference type="GO" id="GO:0000156">
    <property type="term" value="F:phosphorelay response regulator activity"/>
    <property type="evidence" value="ECO:0007669"/>
    <property type="project" value="TreeGrafter"/>
</dbReference>
<dbReference type="GO" id="GO:0000976">
    <property type="term" value="F:transcription cis-regulatory region binding"/>
    <property type="evidence" value="ECO:0007669"/>
    <property type="project" value="TreeGrafter"/>
</dbReference>
<dbReference type="GO" id="GO:0006355">
    <property type="term" value="P:regulation of DNA-templated transcription"/>
    <property type="evidence" value="ECO:0007669"/>
    <property type="project" value="InterPro"/>
</dbReference>
<dbReference type="CDD" id="cd17594">
    <property type="entry name" value="REC_OmpR_VirG"/>
    <property type="match status" value="1"/>
</dbReference>
<dbReference type="CDD" id="cd00383">
    <property type="entry name" value="trans_reg_C"/>
    <property type="match status" value="1"/>
</dbReference>
<dbReference type="FunFam" id="1.10.10.10:FF:000099">
    <property type="entry name" value="Two-component system response regulator TorR"/>
    <property type="match status" value="1"/>
</dbReference>
<dbReference type="Gene3D" id="3.40.50.2300">
    <property type="match status" value="1"/>
</dbReference>
<dbReference type="Gene3D" id="6.10.250.690">
    <property type="match status" value="1"/>
</dbReference>
<dbReference type="Gene3D" id="1.10.10.10">
    <property type="entry name" value="Winged helix-like DNA-binding domain superfamily/Winged helix DNA-binding domain"/>
    <property type="match status" value="1"/>
</dbReference>
<dbReference type="InterPro" id="IPR011006">
    <property type="entry name" value="CheY-like_superfamily"/>
</dbReference>
<dbReference type="InterPro" id="IPR001867">
    <property type="entry name" value="OmpR/PhoB-type_DNA-bd"/>
</dbReference>
<dbReference type="InterPro" id="IPR016032">
    <property type="entry name" value="Sig_transdc_resp-reg_C-effctor"/>
</dbReference>
<dbReference type="InterPro" id="IPR001789">
    <property type="entry name" value="Sig_transdc_resp-reg_receiver"/>
</dbReference>
<dbReference type="InterPro" id="IPR039420">
    <property type="entry name" value="WalR-like"/>
</dbReference>
<dbReference type="InterPro" id="IPR036388">
    <property type="entry name" value="WH-like_DNA-bd_sf"/>
</dbReference>
<dbReference type="NCBIfam" id="NF010430">
    <property type="entry name" value="PRK13856.1"/>
    <property type="match status" value="1"/>
</dbReference>
<dbReference type="PANTHER" id="PTHR48111:SF4">
    <property type="entry name" value="DNA-BINDING DUAL TRANSCRIPTIONAL REGULATOR OMPR"/>
    <property type="match status" value="1"/>
</dbReference>
<dbReference type="PANTHER" id="PTHR48111">
    <property type="entry name" value="REGULATOR OF RPOS"/>
    <property type="match status" value="1"/>
</dbReference>
<dbReference type="Pfam" id="PF00072">
    <property type="entry name" value="Response_reg"/>
    <property type="match status" value="1"/>
</dbReference>
<dbReference type="Pfam" id="PF00486">
    <property type="entry name" value="Trans_reg_C"/>
    <property type="match status" value="1"/>
</dbReference>
<dbReference type="SMART" id="SM00448">
    <property type="entry name" value="REC"/>
    <property type="match status" value="1"/>
</dbReference>
<dbReference type="SMART" id="SM00862">
    <property type="entry name" value="Trans_reg_C"/>
    <property type="match status" value="1"/>
</dbReference>
<dbReference type="SUPFAM" id="SSF46894">
    <property type="entry name" value="C-terminal effector domain of the bipartite response regulators"/>
    <property type="match status" value="1"/>
</dbReference>
<dbReference type="SUPFAM" id="SSF52172">
    <property type="entry name" value="CheY-like"/>
    <property type="match status" value="1"/>
</dbReference>
<dbReference type="PROSITE" id="PS51755">
    <property type="entry name" value="OMPR_PHOB"/>
    <property type="match status" value="1"/>
</dbReference>
<dbReference type="PROSITE" id="PS50110">
    <property type="entry name" value="RESPONSE_REGULATORY"/>
    <property type="match status" value="1"/>
</dbReference>
<evidence type="ECO:0000255" key="1">
    <source>
        <dbReference type="PROSITE-ProRule" id="PRU00169"/>
    </source>
</evidence>
<evidence type="ECO:0000255" key="2">
    <source>
        <dbReference type="PROSITE-ProRule" id="PRU01091"/>
    </source>
</evidence>
<proteinExistence type="inferred from homology"/>
<name>VIRG_AGRT9</name>
<feature type="chain" id="PRO_0000081267" description="Regulatory protein VirG">
    <location>
        <begin position="1"/>
        <end position="267"/>
    </location>
</feature>
<feature type="domain" description="Response regulatory" evidence="1">
    <location>
        <begin position="29"/>
        <end position="143"/>
    </location>
</feature>
<feature type="DNA-binding region" description="OmpR/PhoB-type" evidence="2">
    <location>
        <begin position="155"/>
        <end position="255"/>
    </location>
</feature>
<feature type="modified residue" description="4-aspartylphosphate" evidence="1">
    <location>
        <position position="78"/>
    </location>
</feature>
<organism>
    <name type="scientific">Agrobacterium tumefaciens (strain 15955)</name>
    <dbReference type="NCBI Taxonomy" id="190386"/>
    <lineage>
        <taxon>Bacteria</taxon>
        <taxon>Pseudomonadati</taxon>
        <taxon>Pseudomonadota</taxon>
        <taxon>Alphaproteobacteria</taxon>
        <taxon>Hyphomicrobiales</taxon>
        <taxon>Rhizobiaceae</taxon>
        <taxon>Rhizobium/Agrobacterium group</taxon>
        <taxon>Agrobacterium</taxon>
        <taxon>Agrobacterium tumefaciens complex</taxon>
    </lineage>
</organism>
<comment type="function">
    <text>VirG is required for the positive regulation of at least two vir loci encoded by the Ti plasmid of A.tumefaciens.</text>
</comment>
<comment type="subcellular location">
    <subcellularLocation>
        <location>Cytoplasm</location>
    </subcellularLocation>
</comment>
<comment type="PTM">
    <text>Phosphorylated by wide host range (WHR) VirA protein.</text>
</comment>
<gene>
    <name type="primary">virG</name>
</gene>